<gene>
    <name type="ordered locus">SA1019</name>
</gene>
<reference key="1">
    <citation type="journal article" date="2001" name="Lancet">
        <title>Whole genome sequencing of meticillin-resistant Staphylococcus aureus.</title>
        <authorList>
            <person name="Kuroda M."/>
            <person name="Ohta T."/>
            <person name="Uchiyama I."/>
            <person name="Baba T."/>
            <person name="Yuzawa H."/>
            <person name="Kobayashi I."/>
            <person name="Cui L."/>
            <person name="Oguchi A."/>
            <person name="Aoki K."/>
            <person name="Nagai Y."/>
            <person name="Lian J.-Q."/>
            <person name="Ito T."/>
            <person name="Kanamori M."/>
            <person name="Matsumaru H."/>
            <person name="Maruyama A."/>
            <person name="Murakami H."/>
            <person name="Hosoyama A."/>
            <person name="Mizutani-Ui Y."/>
            <person name="Takahashi N.K."/>
            <person name="Sawano T."/>
            <person name="Inoue R."/>
            <person name="Kaito C."/>
            <person name="Sekimizu K."/>
            <person name="Hirakawa H."/>
            <person name="Kuhara S."/>
            <person name="Goto S."/>
            <person name="Yabuzaki J."/>
            <person name="Kanehisa M."/>
            <person name="Yamashita A."/>
            <person name="Oshima K."/>
            <person name="Furuya K."/>
            <person name="Yoshino C."/>
            <person name="Shiba T."/>
            <person name="Hattori M."/>
            <person name="Ogasawara N."/>
            <person name="Hayashi H."/>
            <person name="Hiramatsu K."/>
        </authorList>
    </citation>
    <scope>NUCLEOTIDE SEQUENCE [LARGE SCALE GENOMIC DNA]</scope>
    <source>
        <strain>N315</strain>
    </source>
</reference>
<reference key="2">
    <citation type="submission" date="2007-10" db="UniProtKB">
        <title>Shotgun proteomic analysis of total and membrane protein extracts of S. aureus strain N315.</title>
        <authorList>
            <person name="Vaezzadeh A.R."/>
            <person name="Deshusses J."/>
            <person name="Lescuyer P."/>
            <person name="Hochstrasser D.F."/>
        </authorList>
    </citation>
    <scope>IDENTIFICATION BY MASS SPECTROMETRY [LARGE SCALE ANALYSIS]</scope>
    <source>
        <strain>N315</strain>
    </source>
</reference>
<protein>
    <recommendedName>
        <fullName>Uncharacterized N-acetyltransferase SA1019</fullName>
        <ecNumber>2.3.1.-</ecNumber>
    </recommendedName>
</protein>
<accession>Q99UT4</accession>
<feature type="chain" id="PRO_0000232487" description="Uncharacterized N-acetyltransferase SA1019">
    <location>
        <begin position="1"/>
        <end position="146"/>
    </location>
</feature>
<feature type="domain" description="N-acetyltransferase">
    <location>
        <begin position="7"/>
        <end position="146"/>
    </location>
</feature>
<proteinExistence type="evidence at protein level"/>
<name>Y1019_STAAN</name>
<organism>
    <name type="scientific">Staphylococcus aureus (strain N315)</name>
    <dbReference type="NCBI Taxonomy" id="158879"/>
    <lineage>
        <taxon>Bacteria</taxon>
        <taxon>Bacillati</taxon>
        <taxon>Bacillota</taxon>
        <taxon>Bacilli</taxon>
        <taxon>Bacillales</taxon>
        <taxon>Staphylococcaceae</taxon>
        <taxon>Staphylococcus</taxon>
    </lineage>
</organism>
<dbReference type="EC" id="2.3.1.-"/>
<dbReference type="EMBL" id="BA000018">
    <property type="protein sequence ID" value="BAB42271.1"/>
    <property type="molecule type" value="Genomic_DNA"/>
</dbReference>
<dbReference type="PIR" id="C89889">
    <property type="entry name" value="C89889"/>
</dbReference>
<dbReference type="RefSeq" id="WP_001289711.1">
    <property type="nucleotide sequence ID" value="NC_002745.2"/>
</dbReference>
<dbReference type="SMR" id="Q99UT4"/>
<dbReference type="EnsemblBacteria" id="BAB42271">
    <property type="protein sequence ID" value="BAB42271"/>
    <property type="gene ID" value="BAB42271"/>
</dbReference>
<dbReference type="KEGG" id="sau:SA1019"/>
<dbReference type="HOGENOM" id="CLU_136634_0_0_9"/>
<dbReference type="GO" id="GO:0016747">
    <property type="term" value="F:acyltransferase activity, transferring groups other than amino-acyl groups"/>
    <property type="evidence" value="ECO:0007669"/>
    <property type="project" value="UniProtKB-UniRule"/>
</dbReference>
<dbReference type="CDD" id="cd04301">
    <property type="entry name" value="NAT_SF"/>
    <property type="match status" value="1"/>
</dbReference>
<dbReference type="Gene3D" id="3.40.630.30">
    <property type="match status" value="1"/>
</dbReference>
<dbReference type="HAMAP" id="MF_00824">
    <property type="entry name" value="Acetyltransf_YlbP"/>
    <property type="match status" value="1"/>
</dbReference>
<dbReference type="InterPro" id="IPR016181">
    <property type="entry name" value="Acyl_CoA_acyltransferase"/>
</dbReference>
<dbReference type="InterPro" id="IPR000182">
    <property type="entry name" value="GNAT_dom"/>
</dbReference>
<dbReference type="InterPro" id="IPR017274">
    <property type="entry name" value="YlbP"/>
</dbReference>
<dbReference type="NCBIfam" id="NF010241">
    <property type="entry name" value="PRK13688.1"/>
    <property type="match status" value="1"/>
</dbReference>
<dbReference type="PIRSF" id="PIRSF037732">
    <property type="entry name" value="YlbP_prd"/>
    <property type="match status" value="1"/>
</dbReference>
<dbReference type="SUPFAM" id="SSF55729">
    <property type="entry name" value="Acyl-CoA N-acyltransferases (Nat)"/>
    <property type="match status" value="1"/>
</dbReference>
<dbReference type="PROSITE" id="PS51186">
    <property type="entry name" value="GNAT"/>
    <property type="match status" value="1"/>
</dbReference>
<sequence length="146" mass="17002">MSEIKRLEINYKTDELFENFRAFGNKDLYMVNELNGQMIDASSDSPFYGIFVGDQLGARMALLKKGDVEEIYFPDFEDYILLWKLEVLPKYQNRGYASELIDFAKSFNMPIKAIGRNDSKDFFLHHGFTDVEAKNIEGHDVLLWKP</sequence>
<keyword id="KW-0012">Acyltransferase</keyword>
<keyword id="KW-0808">Transferase</keyword>